<keyword id="KW-0002">3D-structure</keyword>
<keyword id="KW-0158">Chromosome</keyword>
<keyword id="KW-0903">Direct protein sequencing</keyword>
<keyword id="KW-0226">DNA condensation</keyword>
<keyword id="KW-0238">DNA-binding</keyword>
<keyword id="KW-0539">Nucleus</keyword>
<keyword id="KW-0597">Phosphoprotein</keyword>
<keyword id="KW-1185">Reference proteome</keyword>
<sequence>MTESLVLSPAPAKPKRVKASRRSASHPTYSEMIAAAIRAEKSRGGSSRQSIQKYIKSHYKVGHNADLQIKLSIRRLLAAGVLKQTKGVGASGSFRLAKSDKAKRSPGKKKKAVRRSTSPKKAARPRKARSPAKKPKATARKARKKSRASPKKAKKPKTVKAKSRKASKAKKVKRSKPRAKSGARKSPKKK</sequence>
<comment type="function">
    <text>Histone H5 performs the same function as H1, being necessary for the condensation of nucleosome chains into higher order structures, and replaces histone H1 in certain cells.</text>
</comment>
<comment type="subcellular location">
    <subcellularLocation>
        <location>Nucleus</location>
    </subcellularLocation>
    <subcellularLocation>
        <location>Chromosome</location>
    </subcellularLocation>
</comment>
<comment type="tissue specificity">
    <text>Erythroid cells.</text>
</comment>
<comment type="similarity">
    <text evidence="1">Belongs to the histone H1/H5 family.</text>
</comment>
<name>H5_CHICK</name>
<feature type="initiator methionine" description="Removed" evidence="3">
    <location>
        <position position="1"/>
    </location>
</feature>
<feature type="chain" id="PRO_0000196005" description="Histone H5">
    <location>
        <begin position="2"/>
        <end position="190"/>
    </location>
</feature>
<feature type="domain" description="H15" evidence="1">
    <location>
        <begin position="25"/>
        <end position="98"/>
    </location>
</feature>
<feature type="region of interest" description="Disordered" evidence="2">
    <location>
        <begin position="1"/>
        <end position="29"/>
    </location>
</feature>
<feature type="region of interest" description="Disordered" evidence="2">
    <location>
        <begin position="87"/>
        <end position="190"/>
    </location>
</feature>
<feature type="compositionally biased region" description="Basic residues" evidence="2">
    <location>
        <begin position="13"/>
        <end position="24"/>
    </location>
</feature>
<feature type="compositionally biased region" description="Basic residues" evidence="2">
    <location>
        <begin position="104"/>
        <end position="190"/>
    </location>
</feature>
<feature type="modified residue" description="Phosphoserine" evidence="4">
    <location>
        <position position="23"/>
    </location>
</feature>
<feature type="modified residue" description="Phosphoserine" evidence="4">
    <location>
        <position position="30"/>
    </location>
</feature>
<feature type="modified residue" description="Phosphoserine" evidence="4">
    <location>
        <position position="146"/>
    </location>
</feature>
<feature type="modified residue" description="Phosphoserine" evidence="4">
    <location>
        <position position="167"/>
    </location>
</feature>
<feature type="sequence variant">
    <original>R</original>
    <variation>Q</variation>
    <location>
        <position position="16"/>
    </location>
</feature>
<feature type="helix" evidence="5">
    <location>
        <begin position="29"/>
        <end position="38"/>
    </location>
</feature>
<feature type="helix" evidence="5">
    <location>
        <begin position="48"/>
        <end position="58"/>
    </location>
</feature>
<feature type="helix" evidence="5">
    <location>
        <begin position="65"/>
        <end position="78"/>
    </location>
</feature>
<feature type="strand" evidence="5">
    <location>
        <begin position="81"/>
        <end position="85"/>
    </location>
</feature>
<feature type="strand" evidence="5">
    <location>
        <begin position="93"/>
        <end position="96"/>
    </location>
</feature>
<organism>
    <name type="scientific">Gallus gallus</name>
    <name type="common">Chicken</name>
    <dbReference type="NCBI Taxonomy" id="9031"/>
    <lineage>
        <taxon>Eukaryota</taxon>
        <taxon>Metazoa</taxon>
        <taxon>Chordata</taxon>
        <taxon>Craniata</taxon>
        <taxon>Vertebrata</taxon>
        <taxon>Euteleostomi</taxon>
        <taxon>Archelosauria</taxon>
        <taxon>Archosauria</taxon>
        <taxon>Dinosauria</taxon>
        <taxon>Saurischia</taxon>
        <taxon>Theropoda</taxon>
        <taxon>Coelurosauria</taxon>
        <taxon>Aves</taxon>
        <taxon>Neognathae</taxon>
        <taxon>Galloanserae</taxon>
        <taxon>Galliformes</taxon>
        <taxon>Phasianidae</taxon>
        <taxon>Phasianinae</taxon>
        <taxon>Gallus</taxon>
    </lineage>
</organism>
<proteinExistence type="evidence at protein level"/>
<dbReference type="EMBL" id="J00870">
    <property type="protein sequence ID" value="AAA48798.1"/>
    <property type="molecule type" value="Genomic_DNA"/>
</dbReference>
<dbReference type="EMBL" id="X00169">
    <property type="protein sequence ID" value="CAA24994.1"/>
    <property type="molecule type" value="mRNA"/>
</dbReference>
<dbReference type="PIR" id="A93487">
    <property type="entry name" value="HSCH5"/>
</dbReference>
<dbReference type="RefSeq" id="NP_001038138.1">
    <property type="nucleotide sequence ID" value="NM_001044673.2"/>
</dbReference>
<dbReference type="PDB" id="1HST">
    <property type="method" value="X-ray"/>
    <property type="resolution" value="2.60 A"/>
    <property type="chains" value="A/B=20-109"/>
</dbReference>
<dbReference type="PDB" id="4QLC">
    <property type="method" value="X-ray"/>
    <property type="resolution" value="3.50 A"/>
    <property type="chains" value="U=23-99"/>
</dbReference>
<dbReference type="PDB" id="5WCU">
    <property type="method" value="X-ray"/>
    <property type="resolution" value="5.53 A"/>
    <property type="chains" value="U/V=23-98"/>
</dbReference>
<dbReference type="PDB" id="7XVM">
    <property type="method" value="X-ray"/>
    <property type="resolution" value="2.84 A"/>
    <property type="chains" value="U/V=2-190"/>
</dbReference>
<dbReference type="PDB" id="8XJV">
    <property type="method" value="EM"/>
    <property type="resolution" value="3.60 A"/>
    <property type="chains" value="Ah/Ai/Aj/Ak/Al/Am/An/Ao/Ap/Aq/Ar/As=1-190"/>
</dbReference>
<dbReference type="PDBsum" id="1HST"/>
<dbReference type="PDBsum" id="4QLC"/>
<dbReference type="PDBsum" id="5WCU"/>
<dbReference type="PDBsum" id="7XVM"/>
<dbReference type="PDBsum" id="8XJV"/>
<dbReference type="BMRB" id="P02259"/>
<dbReference type="EMDB" id="EMD-38407"/>
<dbReference type="SMR" id="P02259"/>
<dbReference type="FunCoup" id="P02259">
    <property type="interactions" value="586"/>
</dbReference>
<dbReference type="iPTMnet" id="P02259"/>
<dbReference type="PaxDb" id="9031-ENSGALP00000020094"/>
<dbReference type="Ensembl" id="ENSGALT00000114168">
    <property type="protein sequence ID" value="ENSGALP00000085063"/>
    <property type="gene ID" value="ENSGALG00000068041"/>
</dbReference>
<dbReference type="GeneID" id="693250"/>
<dbReference type="KEGG" id="gga:693250"/>
<dbReference type="CTD" id="693250"/>
<dbReference type="VEuPathDB" id="HostDB:geneid_693250"/>
<dbReference type="eggNOG" id="KOG4012">
    <property type="taxonomic scope" value="Eukaryota"/>
</dbReference>
<dbReference type="HOGENOM" id="CLU_052897_1_1_1"/>
<dbReference type="InParanoid" id="P02259"/>
<dbReference type="OMA" id="PTMVNAH"/>
<dbReference type="OrthoDB" id="1110759at2759"/>
<dbReference type="PhylomeDB" id="P02259"/>
<dbReference type="TreeFam" id="TF313664"/>
<dbReference type="EvolutionaryTrace" id="P02259"/>
<dbReference type="PRO" id="PR:P02259"/>
<dbReference type="Proteomes" id="UP000000539">
    <property type="component" value="Unassembled WGS sequence"/>
</dbReference>
<dbReference type="GO" id="GO:0000786">
    <property type="term" value="C:nucleosome"/>
    <property type="evidence" value="ECO:0000314"/>
    <property type="project" value="CAFA"/>
</dbReference>
<dbReference type="GO" id="GO:0005634">
    <property type="term" value="C:nucleus"/>
    <property type="evidence" value="ECO:0000314"/>
    <property type="project" value="AgBase"/>
</dbReference>
<dbReference type="GO" id="GO:0003690">
    <property type="term" value="F:double-stranded DNA binding"/>
    <property type="evidence" value="ECO:0000318"/>
    <property type="project" value="GO_Central"/>
</dbReference>
<dbReference type="GO" id="GO:0031492">
    <property type="term" value="F:nucleosomal DNA binding"/>
    <property type="evidence" value="ECO:0000315"/>
    <property type="project" value="CAFA"/>
</dbReference>
<dbReference type="GO" id="GO:0030527">
    <property type="term" value="F:structural constituent of chromatin"/>
    <property type="evidence" value="ECO:0007669"/>
    <property type="project" value="InterPro"/>
</dbReference>
<dbReference type="GO" id="GO:0006325">
    <property type="term" value="P:chromatin organization"/>
    <property type="evidence" value="ECO:0000315"/>
    <property type="project" value="CAFA"/>
</dbReference>
<dbReference type="GO" id="GO:0030261">
    <property type="term" value="P:chromosome condensation"/>
    <property type="evidence" value="ECO:0000318"/>
    <property type="project" value="GO_Central"/>
</dbReference>
<dbReference type="GO" id="GO:0045910">
    <property type="term" value="P:negative regulation of DNA recombination"/>
    <property type="evidence" value="ECO:0000318"/>
    <property type="project" value="GO_Central"/>
</dbReference>
<dbReference type="GO" id="GO:0006334">
    <property type="term" value="P:nucleosome assembly"/>
    <property type="evidence" value="ECO:0000315"/>
    <property type="project" value="CAFA"/>
</dbReference>
<dbReference type="CDD" id="cd00073">
    <property type="entry name" value="H15"/>
    <property type="match status" value="1"/>
</dbReference>
<dbReference type="DisProt" id="DP00044"/>
<dbReference type="FunFam" id="1.10.10.10:FF:000140">
    <property type="entry name" value="Histone H1.0"/>
    <property type="match status" value="1"/>
</dbReference>
<dbReference type="Gene3D" id="1.10.10.10">
    <property type="entry name" value="Winged helix-like DNA-binding domain superfamily/Winged helix DNA-binding domain"/>
    <property type="match status" value="1"/>
</dbReference>
<dbReference type="InterPro" id="IPR005819">
    <property type="entry name" value="H1/H5"/>
</dbReference>
<dbReference type="InterPro" id="IPR005818">
    <property type="entry name" value="Histone_H1/H5_H15"/>
</dbReference>
<dbReference type="InterPro" id="IPR036388">
    <property type="entry name" value="WH-like_DNA-bd_sf"/>
</dbReference>
<dbReference type="InterPro" id="IPR036390">
    <property type="entry name" value="WH_DNA-bd_sf"/>
</dbReference>
<dbReference type="PANTHER" id="PTHR11467">
    <property type="entry name" value="HISTONE H1"/>
    <property type="match status" value="1"/>
</dbReference>
<dbReference type="PANTHER" id="PTHR11467:SF182">
    <property type="entry name" value="HISTONE H1.0"/>
    <property type="match status" value="1"/>
</dbReference>
<dbReference type="Pfam" id="PF00538">
    <property type="entry name" value="Linker_histone"/>
    <property type="match status" value="1"/>
</dbReference>
<dbReference type="PRINTS" id="PR00624">
    <property type="entry name" value="HISTONEH5"/>
</dbReference>
<dbReference type="SMART" id="SM00526">
    <property type="entry name" value="H15"/>
    <property type="match status" value="1"/>
</dbReference>
<dbReference type="SUPFAM" id="SSF46785">
    <property type="entry name" value="Winged helix' DNA-binding domain"/>
    <property type="match status" value="1"/>
</dbReference>
<dbReference type="PROSITE" id="PS51504">
    <property type="entry name" value="H15"/>
    <property type="match status" value="1"/>
</dbReference>
<evidence type="ECO:0000255" key="1">
    <source>
        <dbReference type="PROSITE-ProRule" id="PRU00837"/>
    </source>
</evidence>
<evidence type="ECO:0000256" key="2">
    <source>
        <dbReference type="SAM" id="MobiDB-lite"/>
    </source>
</evidence>
<evidence type="ECO:0000269" key="3">
    <source>
    </source>
</evidence>
<evidence type="ECO:0000305" key="4">
    <source>
    </source>
</evidence>
<evidence type="ECO:0007829" key="5">
    <source>
        <dbReference type="PDB" id="1HST"/>
    </source>
</evidence>
<reference key="1">
    <citation type="journal article" date="1983" name="Nucleic Acids Res.">
        <title>The chicken H5 gene is unlinked to core and H1 histone genes.</title>
        <authorList>
            <person name="Krieg P.A."/>
            <person name="Robins A.J."/>
            <person name="D'Andrea R."/>
            <person name="Wells J.R.E."/>
        </authorList>
    </citation>
    <scope>NUCLEOTIDE SEQUENCE [GENOMIC DNA]</scope>
</reference>
<reference key="2">
    <citation type="journal article" date="1983" name="J. Mol. Biol.">
        <title>Genomic organization of the genes coding for the six main histones of the chicken: complete sequence of the H5 gene.</title>
        <authorList>
            <person name="Ruiz-Carrillo A."/>
            <person name="Affolter M."/>
            <person name="Renaud J."/>
        </authorList>
    </citation>
    <scope>NUCLEOTIDE SEQUENCE [MRNA]</scope>
</reference>
<reference key="3">
    <citation type="journal article" date="1975" name="FEBS Lett.">
        <title>Chicken erythrocyte histone H5; I. Amino terminal sequence (70 residues).</title>
        <authorList>
            <person name="Garel A."/>
            <person name="Mazen A."/>
            <person name="Champagne M."/>
            <person name="Sautiere P."/>
            <person name="Kmiecik D."/>
            <person name="Loy O."/>
            <person name="Biserte G."/>
        </authorList>
    </citation>
    <scope>PROTEIN SEQUENCE OF 2-71</scope>
</reference>
<reference key="4">
    <citation type="journal article" date="1975" name="FEBS Lett.">
        <title>Chicken erythrocyte histone H5 II. Amino acid sequence adjacent to the phenylalanine residue.</title>
        <authorList>
            <person name="Sautiere P."/>
            <person name="Kmiecik D."/>
            <person name="Loy O."/>
            <person name="Briand G."/>
            <person name="Biserte G."/>
            <person name="Garel A."/>
            <person name="Champagne M."/>
        </authorList>
    </citation>
    <scope>PROTEIN SEQUENCE OF 72-96</scope>
</reference>
<reference key="5">
    <citation type="journal article" date="1980" name="FEBS Lett.">
        <title>Chicken erythrocyte histone H5. IV. Sequence of the carboxy-termined half of the molecule (96 residues) and complete sequence.</title>
        <authorList>
            <person name="Briand G."/>
            <person name="Kmiecik D."/>
            <person name="Sautiere P."/>
            <person name="Wouters D."/>
            <person name="Borie-Loy O."/>
            <person name="Biserte G."/>
            <person name="Mazen A."/>
            <person name="Champagne M."/>
        </authorList>
    </citation>
    <scope>PROTEIN SEQUENCE OF 95-190</scope>
    <scope>SEQUENCE REVISION TO 91-92</scope>
</reference>
<reference key="6">
    <citation type="journal article" date="1980" name="FEBS Lett.">
        <title>In vitro phosphorylation of histones H5, H2A, H2B and of the dimer H2A-H2B by a cyclic AMP-dependent protein kinase from rat pancreas.</title>
        <authorList>
            <person name="Martinage A."/>
            <person name="Mangeat P."/>
            <person name="Laine B."/>
            <person name="Couppez M."/>
            <person name="Sautiere P."/>
            <person name="Marchis-Mouren G."/>
            <person name="Biserte G."/>
        </authorList>
    </citation>
    <scope>PHOSPHORYLATION AT SER-23; SER-30; SER-146 AND SER-167</scope>
</reference>
<reference key="7">
    <citation type="journal article" date="1993" name="Nature">
        <title>Crystal structure of globular domain of histone H5 and its implications for nucleosome binding.</title>
        <authorList>
            <person name="Ramakrishnan V."/>
            <person name="Finch J.T."/>
            <person name="Graziano V."/>
            <person name="Lee P.L."/>
            <person name="Sweet R.M."/>
        </authorList>
    </citation>
    <scope>X-RAY CRYSTALLOGRAPHY (2.5 ANGSTROMS) OF 23-101</scope>
</reference>
<reference key="8">
    <citation type="journal article" date="1986" name="Proc. Natl. Acad. Sci. U.S.A.">
        <title>Nuclear magnetic resonance study of the globular domain of chicken histone H5: resonance assignment and secondary structure.</title>
        <authorList>
            <person name="Zarbock J."/>
            <person name="Clore G.M."/>
            <person name="Gronenborn A.M."/>
        </authorList>
    </citation>
    <scope>STRUCTURE BY NMR OF 23-101</scope>
</reference>
<accession>P02259</accession>
<protein>
    <recommendedName>
        <fullName>Histone H5</fullName>
    </recommendedName>
</protein>